<accession>Q498F8</accession>
<accession>Q6DE27</accession>
<gene>
    <name type="primary">aktip-a</name>
    <name type="synonym">fts-a</name>
</gene>
<reference key="1">
    <citation type="submission" date="2004-07" db="EMBL/GenBank/DDBJ databases">
        <authorList>
            <consortium name="NIH - Xenopus Gene Collection (XGC) project"/>
        </authorList>
    </citation>
    <scope>NUCLEOTIDE SEQUENCE [LARGE SCALE MRNA]</scope>
    <source>
        <tissue>Egg</tissue>
        <tissue>Ovary</tissue>
    </source>
</reference>
<protein>
    <recommendedName>
        <fullName>AKT-interacting protein homolog A</fullName>
    </recommendedName>
</protein>
<sequence>MNPFWNMSSASVRKRSENDEKISTGDQKISPPRSSSAKKQLPPIPKNAVPITKPISPSLSVQSTNGTHASYGPFYLEYSLLAEFTLVVKQKLPGVYVQPSYRSALMWFGVIFIRHGLYQDGVFKFTVYIPDNYPDGECPRLVFDVPVFHPLVDPISGELDVKRAFTKWRRNHNHIWQVLMYARRIFYKIDTTSPLNPEAAVLYEKDVQLFKSKVVDSVKLCNSHLFDQPKIEDPYAIIFSPWNPVLHDDARERMLAQKKKSEEQSKGLHVSGLSWVKPGSVLPFSKEENSLQT</sequence>
<dbReference type="EMBL" id="BC077318">
    <property type="protein sequence ID" value="AAH77318.1"/>
    <property type="molecule type" value="mRNA"/>
</dbReference>
<dbReference type="EMBL" id="BC100233">
    <property type="protein sequence ID" value="AAI00234.1"/>
    <property type="molecule type" value="mRNA"/>
</dbReference>
<dbReference type="RefSeq" id="NP_001086693.1">
    <property type="nucleotide sequence ID" value="NM_001093224.1"/>
</dbReference>
<dbReference type="SMR" id="Q498F8"/>
<dbReference type="DNASU" id="446528"/>
<dbReference type="GeneID" id="446528"/>
<dbReference type="KEGG" id="xla:446528"/>
<dbReference type="AGR" id="Xenbase:XB-GENE-6255939"/>
<dbReference type="CTD" id="446528"/>
<dbReference type="Xenbase" id="XB-GENE-6255939">
    <property type="gene designation" value="aktip.L"/>
</dbReference>
<dbReference type="OrthoDB" id="5596422at2759"/>
<dbReference type="Proteomes" id="UP000186698">
    <property type="component" value="Chromosome 4L"/>
</dbReference>
<dbReference type="Bgee" id="446528">
    <property type="expression patterns" value="Expressed in egg cell and 19 other cell types or tissues"/>
</dbReference>
<dbReference type="GO" id="GO:0070695">
    <property type="term" value="C:FHF complex"/>
    <property type="evidence" value="ECO:0000250"/>
    <property type="project" value="UniProtKB"/>
</dbReference>
<dbReference type="GO" id="GO:0005886">
    <property type="term" value="C:plasma membrane"/>
    <property type="evidence" value="ECO:0007669"/>
    <property type="project" value="UniProtKB-SubCell"/>
</dbReference>
<dbReference type="GO" id="GO:0006915">
    <property type="term" value="P:apoptotic process"/>
    <property type="evidence" value="ECO:0007669"/>
    <property type="project" value="UniProtKB-KW"/>
</dbReference>
<dbReference type="GO" id="GO:0045022">
    <property type="term" value="P:early endosome to late endosome transport"/>
    <property type="evidence" value="ECO:0000250"/>
    <property type="project" value="UniProtKB"/>
</dbReference>
<dbReference type="GO" id="GO:0007032">
    <property type="term" value="P:endosome organization"/>
    <property type="evidence" value="ECO:0000250"/>
    <property type="project" value="UniProtKB"/>
</dbReference>
<dbReference type="GO" id="GO:0008333">
    <property type="term" value="P:endosome to lysosome transport"/>
    <property type="evidence" value="ECO:0000250"/>
    <property type="project" value="UniProtKB"/>
</dbReference>
<dbReference type="GO" id="GO:0007040">
    <property type="term" value="P:lysosome organization"/>
    <property type="evidence" value="ECO:0000250"/>
    <property type="project" value="UniProtKB"/>
</dbReference>
<dbReference type="GO" id="GO:0015031">
    <property type="term" value="P:protein transport"/>
    <property type="evidence" value="ECO:0007669"/>
    <property type="project" value="UniProtKB-KW"/>
</dbReference>
<dbReference type="CDD" id="cd23814">
    <property type="entry name" value="UEV_AKTIP"/>
    <property type="match status" value="1"/>
</dbReference>
<dbReference type="FunFam" id="3.10.110.10:FF:000030">
    <property type="entry name" value="AKT-interacting protein-like isoform X2"/>
    <property type="match status" value="1"/>
</dbReference>
<dbReference type="Gene3D" id="3.10.110.10">
    <property type="entry name" value="Ubiquitin Conjugating Enzyme"/>
    <property type="match status" value="1"/>
</dbReference>
<dbReference type="InterPro" id="IPR050113">
    <property type="entry name" value="Ub_conjugating_enzyme"/>
</dbReference>
<dbReference type="InterPro" id="IPR000608">
    <property type="entry name" value="UBQ-conjugat_E2_core"/>
</dbReference>
<dbReference type="InterPro" id="IPR016135">
    <property type="entry name" value="UBQ-conjugating_enzyme/RWD"/>
</dbReference>
<dbReference type="PANTHER" id="PTHR24067">
    <property type="entry name" value="UBIQUITIN-CONJUGATING ENZYME E2"/>
    <property type="match status" value="1"/>
</dbReference>
<dbReference type="Pfam" id="PF00179">
    <property type="entry name" value="UQ_con"/>
    <property type="match status" value="1"/>
</dbReference>
<dbReference type="SMART" id="SM00212">
    <property type="entry name" value="UBCc"/>
    <property type="match status" value="1"/>
</dbReference>
<dbReference type="SUPFAM" id="SSF54495">
    <property type="entry name" value="UBC-like"/>
    <property type="match status" value="1"/>
</dbReference>
<dbReference type="PROSITE" id="PS50127">
    <property type="entry name" value="UBC_2"/>
    <property type="match status" value="1"/>
</dbReference>
<feature type="chain" id="PRO_0000379022" description="AKT-interacting protein homolog A">
    <location>
        <begin position="1"/>
        <end position="293"/>
    </location>
</feature>
<feature type="domain" description="UBC core" evidence="2">
    <location>
        <begin position="75"/>
        <end position="223"/>
    </location>
</feature>
<feature type="region of interest" description="Disordered" evidence="3">
    <location>
        <begin position="1"/>
        <end position="45"/>
    </location>
</feature>
<feature type="region of interest" description="Disordered" evidence="3">
    <location>
        <begin position="256"/>
        <end position="293"/>
    </location>
</feature>
<feature type="compositionally biased region" description="Polar residues" evidence="3">
    <location>
        <begin position="1"/>
        <end position="11"/>
    </location>
</feature>
<feature type="compositionally biased region" description="Basic and acidic residues" evidence="3">
    <location>
        <begin position="14"/>
        <end position="23"/>
    </location>
</feature>
<feature type="compositionally biased region" description="Polar residues" evidence="3">
    <location>
        <begin position="24"/>
        <end position="38"/>
    </location>
</feature>
<feature type="compositionally biased region" description="Basic and acidic residues" evidence="3">
    <location>
        <begin position="256"/>
        <end position="266"/>
    </location>
</feature>
<feature type="sequence conflict" description="In Ref. 1; AAH77318." evidence="4" ref="1">
    <original>N</original>
    <variation>Y</variation>
    <location>
        <position position="2"/>
    </location>
</feature>
<feature type="sequence conflict" description="In Ref. 1; AAH77318." evidence="4" ref="1">
    <location>
        <position position="258"/>
    </location>
</feature>
<name>AKTPA_XENLA</name>
<proteinExistence type="evidence at transcript level"/>
<comment type="function">
    <text evidence="1">May function to promote vesicle trafficking and/or fusion. May also regulate apoptosis (By similarity).</text>
</comment>
<comment type="subcellular location">
    <subcellularLocation>
        <location evidence="1">Cytoplasm</location>
    </subcellularLocation>
    <subcellularLocation>
        <location evidence="1">Cell membrane</location>
        <topology evidence="1">Peripheral membrane protein</topology>
    </subcellularLocation>
</comment>
<comment type="similarity">
    <text evidence="2">Belongs to the ubiquitin-conjugating enzyme family. FTS subfamily.</text>
</comment>
<comment type="caution">
    <text evidence="4">Lacks the conserved Cys residue necessary for ubiquitin-conjugating enzyme E2 activity.</text>
</comment>
<organism>
    <name type="scientific">Xenopus laevis</name>
    <name type="common">African clawed frog</name>
    <dbReference type="NCBI Taxonomy" id="8355"/>
    <lineage>
        <taxon>Eukaryota</taxon>
        <taxon>Metazoa</taxon>
        <taxon>Chordata</taxon>
        <taxon>Craniata</taxon>
        <taxon>Vertebrata</taxon>
        <taxon>Euteleostomi</taxon>
        <taxon>Amphibia</taxon>
        <taxon>Batrachia</taxon>
        <taxon>Anura</taxon>
        <taxon>Pipoidea</taxon>
        <taxon>Pipidae</taxon>
        <taxon>Xenopodinae</taxon>
        <taxon>Xenopus</taxon>
        <taxon>Xenopus</taxon>
    </lineage>
</organism>
<keyword id="KW-0053">Apoptosis</keyword>
<keyword id="KW-1003">Cell membrane</keyword>
<keyword id="KW-0963">Cytoplasm</keyword>
<keyword id="KW-0472">Membrane</keyword>
<keyword id="KW-0653">Protein transport</keyword>
<keyword id="KW-1185">Reference proteome</keyword>
<keyword id="KW-0813">Transport</keyword>
<evidence type="ECO:0000250" key="1"/>
<evidence type="ECO:0000255" key="2">
    <source>
        <dbReference type="PROSITE-ProRule" id="PRU00388"/>
    </source>
</evidence>
<evidence type="ECO:0000256" key="3">
    <source>
        <dbReference type="SAM" id="MobiDB-lite"/>
    </source>
</evidence>
<evidence type="ECO:0000305" key="4"/>